<proteinExistence type="inferred from homology"/>
<gene>
    <name evidence="1" type="primary">ndk</name>
    <name type="ordered locus">SPP_1979</name>
</gene>
<keyword id="KW-0067">ATP-binding</keyword>
<keyword id="KW-0963">Cytoplasm</keyword>
<keyword id="KW-0418">Kinase</keyword>
<keyword id="KW-0460">Magnesium</keyword>
<keyword id="KW-0479">Metal-binding</keyword>
<keyword id="KW-0546">Nucleotide metabolism</keyword>
<keyword id="KW-0547">Nucleotide-binding</keyword>
<keyword id="KW-0597">Phosphoprotein</keyword>
<keyword id="KW-0808">Transferase</keyword>
<evidence type="ECO:0000255" key="1">
    <source>
        <dbReference type="HAMAP-Rule" id="MF_00451"/>
    </source>
</evidence>
<dbReference type="EC" id="2.7.4.6" evidence="1"/>
<dbReference type="EMBL" id="CP000920">
    <property type="protein sequence ID" value="ACO20583.1"/>
    <property type="molecule type" value="Genomic_DNA"/>
</dbReference>
<dbReference type="RefSeq" id="WP_000438290.1">
    <property type="nucleotide sequence ID" value="NC_012467.1"/>
</dbReference>
<dbReference type="SMR" id="C1CMQ6"/>
<dbReference type="GeneID" id="45652828"/>
<dbReference type="KEGG" id="spp:SPP_1979"/>
<dbReference type="HOGENOM" id="CLU_060216_6_3_9"/>
<dbReference type="GO" id="GO:0005737">
    <property type="term" value="C:cytoplasm"/>
    <property type="evidence" value="ECO:0007669"/>
    <property type="project" value="UniProtKB-SubCell"/>
</dbReference>
<dbReference type="GO" id="GO:0005524">
    <property type="term" value="F:ATP binding"/>
    <property type="evidence" value="ECO:0007669"/>
    <property type="project" value="UniProtKB-UniRule"/>
</dbReference>
<dbReference type="GO" id="GO:0046872">
    <property type="term" value="F:metal ion binding"/>
    <property type="evidence" value="ECO:0007669"/>
    <property type="project" value="UniProtKB-KW"/>
</dbReference>
<dbReference type="GO" id="GO:0004550">
    <property type="term" value="F:nucleoside diphosphate kinase activity"/>
    <property type="evidence" value="ECO:0007669"/>
    <property type="project" value="UniProtKB-UniRule"/>
</dbReference>
<dbReference type="GO" id="GO:0006241">
    <property type="term" value="P:CTP biosynthetic process"/>
    <property type="evidence" value="ECO:0007669"/>
    <property type="project" value="UniProtKB-UniRule"/>
</dbReference>
<dbReference type="GO" id="GO:0006183">
    <property type="term" value="P:GTP biosynthetic process"/>
    <property type="evidence" value="ECO:0007669"/>
    <property type="project" value="UniProtKB-UniRule"/>
</dbReference>
<dbReference type="GO" id="GO:0006228">
    <property type="term" value="P:UTP biosynthetic process"/>
    <property type="evidence" value="ECO:0007669"/>
    <property type="project" value="UniProtKB-UniRule"/>
</dbReference>
<dbReference type="CDD" id="cd04413">
    <property type="entry name" value="NDPk_I"/>
    <property type="match status" value="1"/>
</dbReference>
<dbReference type="FunFam" id="3.30.70.141:FF:000013">
    <property type="entry name" value="Nucleoside diphosphate kinase"/>
    <property type="match status" value="1"/>
</dbReference>
<dbReference type="Gene3D" id="3.30.70.141">
    <property type="entry name" value="Nucleoside diphosphate kinase-like domain"/>
    <property type="match status" value="1"/>
</dbReference>
<dbReference type="HAMAP" id="MF_00451">
    <property type="entry name" value="NDP_kinase"/>
    <property type="match status" value="1"/>
</dbReference>
<dbReference type="InterPro" id="IPR034907">
    <property type="entry name" value="NDK-like_dom"/>
</dbReference>
<dbReference type="InterPro" id="IPR036850">
    <property type="entry name" value="NDK-like_dom_sf"/>
</dbReference>
<dbReference type="InterPro" id="IPR001564">
    <property type="entry name" value="Nucleoside_diP_kinase"/>
</dbReference>
<dbReference type="InterPro" id="IPR023005">
    <property type="entry name" value="Nucleoside_diP_kinase_AS"/>
</dbReference>
<dbReference type="NCBIfam" id="NF001908">
    <property type="entry name" value="PRK00668.1"/>
    <property type="match status" value="1"/>
</dbReference>
<dbReference type="PANTHER" id="PTHR11349">
    <property type="entry name" value="NUCLEOSIDE DIPHOSPHATE KINASE"/>
    <property type="match status" value="1"/>
</dbReference>
<dbReference type="Pfam" id="PF00334">
    <property type="entry name" value="NDK"/>
    <property type="match status" value="1"/>
</dbReference>
<dbReference type="PRINTS" id="PR01243">
    <property type="entry name" value="NUCDPKINASE"/>
</dbReference>
<dbReference type="SMART" id="SM00562">
    <property type="entry name" value="NDK"/>
    <property type="match status" value="1"/>
</dbReference>
<dbReference type="SUPFAM" id="SSF54919">
    <property type="entry name" value="Nucleoside diphosphate kinase, NDK"/>
    <property type="match status" value="1"/>
</dbReference>
<dbReference type="PROSITE" id="PS00469">
    <property type="entry name" value="NDPK"/>
    <property type="match status" value="1"/>
</dbReference>
<dbReference type="PROSITE" id="PS51374">
    <property type="entry name" value="NDPK_LIKE"/>
    <property type="match status" value="1"/>
</dbReference>
<comment type="function">
    <text evidence="1">Major role in the synthesis of nucleoside triphosphates other than ATP. The ATP gamma phosphate is transferred to the NDP beta phosphate via a ping-pong mechanism, using a phosphorylated active-site intermediate.</text>
</comment>
<comment type="catalytic activity">
    <reaction evidence="1">
        <text>a 2'-deoxyribonucleoside 5'-diphosphate + ATP = a 2'-deoxyribonucleoside 5'-triphosphate + ADP</text>
        <dbReference type="Rhea" id="RHEA:44640"/>
        <dbReference type="ChEBI" id="CHEBI:30616"/>
        <dbReference type="ChEBI" id="CHEBI:61560"/>
        <dbReference type="ChEBI" id="CHEBI:73316"/>
        <dbReference type="ChEBI" id="CHEBI:456216"/>
        <dbReference type="EC" id="2.7.4.6"/>
    </reaction>
</comment>
<comment type="catalytic activity">
    <reaction evidence="1">
        <text>a ribonucleoside 5'-diphosphate + ATP = a ribonucleoside 5'-triphosphate + ADP</text>
        <dbReference type="Rhea" id="RHEA:18113"/>
        <dbReference type="ChEBI" id="CHEBI:30616"/>
        <dbReference type="ChEBI" id="CHEBI:57930"/>
        <dbReference type="ChEBI" id="CHEBI:61557"/>
        <dbReference type="ChEBI" id="CHEBI:456216"/>
        <dbReference type="EC" id="2.7.4.6"/>
    </reaction>
</comment>
<comment type="cofactor">
    <cofactor evidence="1">
        <name>Mg(2+)</name>
        <dbReference type="ChEBI" id="CHEBI:18420"/>
    </cofactor>
</comment>
<comment type="subunit">
    <text evidence="1">Homotetramer.</text>
</comment>
<comment type="subcellular location">
    <subcellularLocation>
        <location evidence="1">Cytoplasm</location>
    </subcellularLocation>
</comment>
<comment type="similarity">
    <text evidence="1">Belongs to the NDK family.</text>
</comment>
<name>NDK_STRZP</name>
<protein>
    <recommendedName>
        <fullName evidence="1">Nucleoside diphosphate kinase</fullName>
        <shortName evidence="1">NDK</shortName>
        <shortName evidence="1">NDP kinase</shortName>
        <ecNumber evidence="1">2.7.4.6</ecNumber>
    </recommendedName>
    <alternativeName>
        <fullName evidence="1">Nucleoside-2-P kinase</fullName>
    </alternativeName>
</protein>
<feature type="chain" id="PRO_1000192293" description="Nucleoside diphosphate kinase">
    <location>
        <begin position="1"/>
        <end position="137"/>
    </location>
</feature>
<feature type="active site" description="Pros-phosphohistidine intermediate" evidence="1">
    <location>
        <position position="121"/>
    </location>
</feature>
<feature type="binding site" evidence="1">
    <location>
        <position position="9"/>
    </location>
    <ligand>
        <name>ATP</name>
        <dbReference type="ChEBI" id="CHEBI:30616"/>
    </ligand>
</feature>
<feature type="binding site" evidence="1">
    <location>
        <position position="58"/>
    </location>
    <ligand>
        <name>ATP</name>
        <dbReference type="ChEBI" id="CHEBI:30616"/>
    </ligand>
</feature>
<feature type="binding site" evidence="1">
    <location>
        <position position="86"/>
    </location>
    <ligand>
        <name>ATP</name>
        <dbReference type="ChEBI" id="CHEBI:30616"/>
    </ligand>
</feature>
<feature type="binding site" evidence="1">
    <location>
        <position position="92"/>
    </location>
    <ligand>
        <name>ATP</name>
        <dbReference type="ChEBI" id="CHEBI:30616"/>
    </ligand>
</feature>
<feature type="binding site" evidence="1">
    <location>
        <position position="103"/>
    </location>
    <ligand>
        <name>ATP</name>
        <dbReference type="ChEBI" id="CHEBI:30616"/>
    </ligand>
</feature>
<feature type="binding site" evidence="1">
    <location>
        <position position="113"/>
    </location>
    <ligand>
        <name>ATP</name>
        <dbReference type="ChEBI" id="CHEBI:30616"/>
    </ligand>
</feature>
<accession>C1CMQ6</accession>
<reference key="1">
    <citation type="journal article" date="2010" name="Genome Biol.">
        <title>Structure and dynamics of the pan-genome of Streptococcus pneumoniae and closely related species.</title>
        <authorList>
            <person name="Donati C."/>
            <person name="Hiller N.L."/>
            <person name="Tettelin H."/>
            <person name="Muzzi A."/>
            <person name="Croucher N.J."/>
            <person name="Angiuoli S.V."/>
            <person name="Oggioni M."/>
            <person name="Dunning Hotopp J.C."/>
            <person name="Hu F.Z."/>
            <person name="Riley D.R."/>
            <person name="Covacci A."/>
            <person name="Mitchell T.J."/>
            <person name="Bentley S.D."/>
            <person name="Kilian M."/>
            <person name="Ehrlich G.D."/>
            <person name="Rappuoli R."/>
            <person name="Moxon E.R."/>
            <person name="Masignani V."/>
        </authorList>
    </citation>
    <scope>NUCLEOTIDE SEQUENCE [LARGE SCALE GENOMIC DNA]</scope>
    <source>
        <strain>P1031</strain>
    </source>
</reference>
<sequence>MEQTFFIIKPDGVKRGLVGEVLKRIEQRGFTIEKLEFRSQVSEELIDQHYQDLVGQSFYPPIREFMTSGPVLVGVISGPKVIETWRTMMGATRPEEALPGTIRGDFAKAAGENEVIQNVVHGSDSEESAKREIALWF</sequence>
<organism>
    <name type="scientific">Streptococcus pneumoniae (strain P1031)</name>
    <dbReference type="NCBI Taxonomy" id="488223"/>
    <lineage>
        <taxon>Bacteria</taxon>
        <taxon>Bacillati</taxon>
        <taxon>Bacillota</taxon>
        <taxon>Bacilli</taxon>
        <taxon>Lactobacillales</taxon>
        <taxon>Streptococcaceae</taxon>
        <taxon>Streptococcus</taxon>
    </lineage>
</organism>